<gene>
    <name evidence="1" type="primary">trmD</name>
    <name type="ordered locus">CD630_12560</name>
</gene>
<protein>
    <recommendedName>
        <fullName evidence="1">tRNA (guanine-N(1)-)-methyltransferase</fullName>
        <ecNumber evidence="1">2.1.1.228</ecNumber>
    </recommendedName>
    <alternativeName>
        <fullName evidence="1">M1G-methyltransferase</fullName>
    </alternativeName>
    <alternativeName>
        <fullName evidence="1">tRNA [GM37] methyltransferase</fullName>
    </alternativeName>
</protein>
<dbReference type="EC" id="2.1.1.228" evidence="1"/>
<dbReference type="EMBL" id="AM180355">
    <property type="protein sequence ID" value="CAJ68112.1"/>
    <property type="molecule type" value="Genomic_DNA"/>
</dbReference>
<dbReference type="RefSeq" id="WP_003438222.1">
    <property type="nucleotide sequence ID" value="NZ_JAUPES010000045.1"/>
</dbReference>
<dbReference type="RefSeq" id="YP_001087750.1">
    <property type="nucleotide sequence ID" value="NC_009089.1"/>
</dbReference>
<dbReference type="SMR" id="Q18BC2"/>
<dbReference type="STRING" id="272563.CD630_12560"/>
<dbReference type="EnsemblBacteria" id="CAJ68112">
    <property type="protein sequence ID" value="CAJ68112"/>
    <property type="gene ID" value="CD630_12560"/>
</dbReference>
<dbReference type="GeneID" id="66353657"/>
<dbReference type="KEGG" id="cdf:CD630_12560"/>
<dbReference type="KEGG" id="pdc:CDIF630_01409"/>
<dbReference type="PATRIC" id="fig|272563.120.peg.1314"/>
<dbReference type="eggNOG" id="COG0336">
    <property type="taxonomic scope" value="Bacteria"/>
</dbReference>
<dbReference type="OrthoDB" id="9807416at2"/>
<dbReference type="PhylomeDB" id="Q18BC2"/>
<dbReference type="BioCyc" id="PDIF272563:G12WB-1390-MONOMER"/>
<dbReference type="Proteomes" id="UP000001978">
    <property type="component" value="Chromosome"/>
</dbReference>
<dbReference type="GO" id="GO:0005829">
    <property type="term" value="C:cytosol"/>
    <property type="evidence" value="ECO:0007669"/>
    <property type="project" value="TreeGrafter"/>
</dbReference>
<dbReference type="GO" id="GO:0052906">
    <property type="term" value="F:tRNA (guanine(37)-N1)-methyltransferase activity"/>
    <property type="evidence" value="ECO:0007669"/>
    <property type="project" value="UniProtKB-UniRule"/>
</dbReference>
<dbReference type="GO" id="GO:0002939">
    <property type="term" value="P:tRNA N1-guanine methylation"/>
    <property type="evidence" value="ECO:0007669"/>
    <property type="project" value="TreeGrafter"/>
</dbReference>
<dbReference type="CDD" id="cd18080">
    <property type="entry name" value="TrmD-like"/>
    <property type="match status" value="1"/>
</dbReference>
<dbReference type="FunFam" id="1.10.1270.20:FF:000001">
    <property type="entry name" value="tRNA (guanine-N(1)-)-methyltransferase"/>
    <property type="match status" value="1"/>
</dbReference>
<dbReference type="FunFam" id="3.40.1280.10:FF:000001">
    <property type="entry name" value="tRNA (guanine-N(1)-)-methyltransferase"/>
    <property type="match status" value="1"/>
</dbReference>
<dbReference type="Gene3D" id="3.40.1280.10">
    <property type="match status" value="1"/>
</dbReference>
<dbReference type="Gene3D" id="1.10.1270.20">
    <property type="entry name" value="tRNA(m1g37)methyltransferase, domain 2"/>
    <property type="match status" value="1"/>
</dbReference>
<dbReference type="HAMAP" id="MF_00605">
    <property type="entry name" value="TrmD"/>
    <property type="match status" value="1"/>
</dbReference>
<dbReference type="InterPro" id="IPR029028">
    <property type="entry name" value="Alpha/beta_knot_MTases"/>
</dbReference>
<dbReference type="InterPro" id="IPR023148">
    <property type="entry name" value="tRNA_m1G_MeTrfase_C_sf"/>
</dbReference>
<dbReference type="InterPro" id="IPR002649">
    <property type="entry name" value="tRNA_m1G_MeTrfase_TrmD"/>
</dbReference>
<dbReference type="InterPro" id="IPR029026">
    <property type="entry name" value="tRNA_m1G_MTases_N"/>
</dbReference>
<dbReference type="InterPro" id="IPR016009">
    <property type="entry name" value="tRNA_MeTrfase_TRMD/TRM10"/>
</dbReference>
<dbReference type="NCBIfam" id="NF000648">
    <property type="entry name" value="PRK00026.1"/>
    <property type="match status" value="1"/>
</dbReference>
<dbReference type="NCBIfam" id="TIGR00088">
    <property type="entry name" value="trmD"/>
    <property type="match status" value="1"/>
</dbReference>
<dbReference type="PANTHER" id="PTHR46417">
    <property type="entry name" value="TRNA (GUANINE-N(1)-)-METHYLTRANSFERASE"/>
    <property type="match status" value="1"/>
</dbReference>
<dbReference type="PANTHER" id="PTHR46417:SF1">
    <property type="entry name" value="TRNA (GUANINE-N(1)-)-METHYLTRANSFERASE"/>
    <property type="match status" value="1"/>
</dbReference>
<dbReference type="Pfam" id="PF01746">
    <property type="entry name" value="tRNA_m1G_MT"/>
    <property type="match status" value="1"/>
</dbReference>
<dbReference type="PIRSF" id="PIRSF000386">
    <property type="entry name" value="tRNA_mtase"/>
    <property type="match status" value="1"/>
</dbReference>
<dbReference type="SUPFAM" id="SSF75217">
    <property type="entry name" value="alpha/beta knot"/>
    <property type="match status" value="1"/>
</dbReference>
<reference key="1">
    <citation type="journal article" date="2006" name="Nat. Genet.">
        <title>The multidrug-resistant human pathogen Clostridium difficile has a highly mobile, mosaic genome.</title>
        <authorList>
            <person name="Sebaihia M."/>
            <person name="Wren B.W."/>
            <person name="Mullany P."/>
            <person name="Fairweather N.F."/>
            <person name="Minton N."/>
            <person name="Stabler R."/>
            <person name="Thomson N.R."/>
            <person name="Roberts A.P."/>
            <person name="Cerdeno-Tarraga A.M."/>
            <person name="Wang H."/>
            <person name="Holden M.T.G."/>
            <person name="Wright A."/>
            <person name="Churcher C."/>
            <person name="Quail M.A."/>
            <person name="Baker S."/>
            <person name="Bason N."/>
            <person name="Brooks K."/>
            <person name="Chillingworth T."/>
            <person name="Cronin A."/>
            <person name="Davis P."/>
            <person name="Dowd L."/>
            <person name="Fraser A."/>
            <person name="Feltwell T."/>
            <person name="Hance Z."/>
            <person name="Holroyd S."/>
            <person name="Jagels K."/>
            <person name="Moule S."/>
            <person name="Mungall K."/>
            <person name="Price C."/>
            <person name="Rabbinowitsch E."/>
            <person name="Sharp S."/>
            <person name="Simmonds M."/>
            <person name="Stevens K."/>
            <person name="Unwin L."/>
            <person name="Whithead S."/>
            <person name="Dupuy B."/>
            <person name="Dougan G."/>
            <person name="Barrell B."/>
            <person name="Parkhill J."/>
        </authorList>
    </citation>
    <scope>NUCLEOTIDE SEQUENCE [LARGE SCALE GENOMIC DNA]</scope>
    <source>
        <strain>630</strain>
    </source>
</reference>
<sequence length="231" mass="26949">MRFHIMTLFPEIFNSYMDESIMKRAVEKGIIEVHIYNIRDFSNNKHKKVDDYPFGGGAGMVMTPQPIYDTYKHIITTHNINNPSVIYLTPKGKVYNQSMAKQMSLKEDIILLCGHYEGIDERIIDLIVTDEISIGDYVLTGGELPALIMIDSISRLIPGVLNQEESFEEESFKDNLLEYPHYTRPRDFEGLKVPEVLLSGNHKKIDEWRREESIRITKERRFDLYKKSNEK</sequence>
<keyword id="KW-0963">Cytoplasm</keyword>
<keyword id="KW-0489">Methyltransferase</keyword>
<keyword id="KW-1185">Reference proteome</keyword>
<keyword id="KW-0949">S-adenosyl-L-methionine</keyword>
<keyword id="KW-0808">Transferase</keyword>
<keyword id="KW-0819">tRNA processing</keyword>
<feature type="chain" id="PRO_0000257405" description="tRNA (guanine-N(1)-)-methyltransferase">
    <location>
        <begin position="1"/>
        <end position="231"/>
    </location>
</feature>
<feature type="binding site" evidence="1">
    <location>
        <position position="114"/>
    </location>
    <ligand>
        <name>S-adenosyl-L-methionine</name>
        <dbReference type="ChEBI" id="CHEBI:59789"/>
    </ligand>
</feature>
<feature type="binding site" evidence="1">
    <location>
        <begin position="134"/>
        <end position="139"/>
    </location>
    <ligand>
        <name>S-adenosyl-L-methionine</name>
        <dbReference type="ChEBI" id="CHEBI:59789"/>
    </ligand>
</feature>
<proteinExistence type="inferred from homology"/>
<name>TRMD_CLOD6</name>
<comment type="function">
    <text evidence="1">Specifically methylates guanosine-37 in various tRNAs.</text>
</comment>
<comment type="catalytic activity">
    <reaction evidence="1">
        <text>guanosine(37) in tRNA + S-adenosyl-L-methionine = N(1)-methylguanosine(37) in tRNA + S-adenosyl-L-homocysteine + H(+)</text>
        <dbReference type="Rhea" id="RHEA:36899"/>
        <dbReference type="Rhea" id="RHEA-COMP:10145"/>
        <dbReference type="Rhea" id="RHEA-COMP:10147"/>
        <dbReference type="ChEBI" id="CHEBI:15378"/>
        <dbReference type="ChEBI" id="CHEBI:57856"/>
        <dbReference type="ChEBI" id="CHEBI:59789"/>
        <dbReference type="ChEBI" id="CHEBI:73542"/>
        <dbReference type="ChEBI" id="CHEBI:74269"/>
        <dbReference type="EC" id="2.1.1.228"/>
    </reaction>
</comment>
<comment type="subunit">
    <text evidence="1">Homodimer.</text>
</comment>
<comment type="subcellular location">
    <subcellularLocation>
        <location evidence="1">Cytoplasm</location>
    </subcellularLocation>
</comment>
<comment type="similarity">
    <text evidence="1">Belongs to the RNA methyltransferase TrmD family.</text>
</comment>
<organism>
    <name type="scientific">Clostridioides difficile (strain 630)</name>
    <name type="common">Peptoclostridium difficile</name>
    <dbReference type="NCBI Taxonomy" id="272563"/>
    <lineage>
        <taxon>Bacteria</taxon>
        <taxon>Bacillati</taxon>
        <taxon>Bacillota</taxon>
        <taxon>Clostridia</taxon>
        <taxon>Peptostreptococcales</taxon>
        <taxon>Peptostreptococcaceae</taxon>
        <taxon>Clostridioides</taxon>
    </lineage>
</organism>
<accession>Q18BC2</accession>
<evidence type="ECO:0000255" key="1">
    <source>
        <dbReference type="HAMAP-Rule" id="MF_00605"/>
    </source>
</evidence>